<keyword id="KW-0108">Calcium channel impairing toxin</keyword>
<keyword id="KW-0165">Cleavage on pair of basic residues</keyword>
<keyword id="KW-0903">Direct protein sequencing</keyword>
<keyword id="KW-1015">Disulfide bond</keyword>
<keyword id="KW-0872">Ion channel impairing toxin</keyword>
<keyword id="KW-0528">Neurotoxin</keyword>
<keyword id="KW-0964">Secreted</keyword>
<keyword id="KW-0732">Signal</keyword>
<keyword id="KW-0800">Toxin</keyword>
<keyword id="KW-1218">Voltage-gated calcium channel impairing toxin</keyword>
<keyword id="KW-0738">Voltage-gated sodium channel impairing toxin</keyword>
<proteinExistence type="evidence at protein level"/>
<name>TX35_ACAPA</name>
<reference key="1">
    <citation type="journal article" date="2021" name="Peptides">
        <title>Purification and characterization of peptides Ap2, Ap3 and Ap5 (omega-toxins) from the venom of the Brazilian tarantula Acanthoscurria paulensis.</title>
        <authorList>
            <person name="Tibery D.V."/>
            <person name="de Souza A.C.B."/>
            <person name="Mourao C.B.F."/>
            <person name="do Nascimento J.M."/>
            <person name="Schwartz E.F."/>
        </authorList>
    </citation>
    <scope>NUCLEOTIDE SEQUENCE [MRNA]</scope>
    <scope>PARTIAL PROTEIN SEQUENCE</scope>
    <scope>FUNCTION</scope>
    <scope>MASS SPECTROMETRY</scope>
    <scope>SUBCELLULAR LOCATION</scope>
    <source>
        <tissue>Venom</tissue>
        <tissue>Venom gland</tissue>
    </source>
</reference>
<protein>
    <recommendedName>
        <fullName evidence="3">Omega toxin Ap5</fullName>
    </recommendedName>
    <component>
        <recommendedName>
            <fullName evidence="3">Omega toxin Ap3</fullName>
        </recommendedName>
    </component>
</protein>
<comment type="function">
    <molecule>Omega toxin Ap3</molecule>
    <text evidence="2">Shows a weak inhibition on the voltage-gated calcium channel Cav2.1/CACNA1A and some voltage-gated sodium channels (with 1 uM toxin tested: 22.08% inhibition on Cav2.1/CACNA1A, 6.6% on Nav1.1/SCN1A, 4.2% on Nav1.5, and 16% on Nav1.7).</text>
</comment>
<comment type="function">
    <molecule>Omega toxin Ap5</molecule>
    <text evidence="2">Shows a weak inhibition on the voltage-gated calcium channel Cav2.1/CACNA1A (28.06% at 1 uM).</text>
</comment>
<comment type="subcellular location">
    <subcellularLocation>
        <location evidence="2">Secreted</location>
    </subcellularLocation>
</comment>
<comment type="tissue specificity">
    <text evidence="5">Expressed by the venom duct.</text>
</comment>
<comment type="domain">
    <text evidence="4">The presence of a 'disulfide through disulfide knot' structurally defines this protein as a knottin.</text>
</comment>
<comment type="mass spectrometry">
    <molecule>Omega toxin Ap3</molecule>
    <text>Monoisotopic mass.</text>
</comment>
<comment type="mass spectrometry">
    <molecule>Omega toxin Ap5</molecule>
    <text>Monoisotopic mass.</text>
</comment>
<comment type="miscellaneous">
    <molecule>Omega toxin Ap3</molecule>
    <text evidence="2">Negative results: does not show activity on Cav1.2/CACNA1C, and Cav2.2/CACNA1B.</text>
</comment>
<comment type="miscellaneous">
    <molecule>Omega toxin Ap5</molecule>
    <text evidence="2">Negative results: does not show activity on Nav1.1/SCN1A, Nav1.5/SCN5A, Nav1.7/SCN9A, Cav1.2/CACNA1C, and Cav2.2/CACNA1B.</text>
</comment>
<comment type="similarity">
    <text evidence="4">Belongs to the neurotoxin 14 (magi-1) family. 08 (Ltx-4) subfamily.</text>
</comment>
<accession>P0DV32</accession>
<sequence>MNTIQVILFAVVLVLTVTVGQADEDSAETSLLRKLEEAEASMFGQYLEESKNSREKRCAVENVPCDKDRPGCCREYECLKPTGYGWWYGSYYCYKKKERLIST</sequence>
<dbReference type="SMR" id="P0DV32"/>
<dbReference type="GO" id="GO:0005576">
    <property type="term" value="C:extracellular region"/>
    <property type="evidence" value="ECO:0007669"/>
    <property type="project" value="UniProtKB-SubCell"/>
</dbReference>
<dbReference type="GO" id="GO:0005246">
    <property type="term" value="F:calcium channel regulator activity"/>
    <property type="evidence" value="ECO:0007669"/>
    <property type="project" value="UniProtKB-KW"/>
</dbReference>
<dbReference type="GO" id="GO:0019871">
    <property type="term" value="F:sodium channel inhibitor activity"/>
    <property type="evidence" value="ECO:0007669"/>
    <property type="project" value="InterPro"/>
</dbReference>
<dbReference type="GO" id="GO:0090729">
    <property type="term" value="F:toxin activity"/>
    <property type="evidence" value="ECO:0007669"/>
    <property type="project" value="UniProtKB-KW"/>
</dbReference>
<dbReference type="InterPro" id="IPR012627">
    <property type="entry name" value="Toxin_22"/>
</dbReference>
<dbReference type="Pfam" id="PF08092">
    <property type="entry name" value="Toxin_22"/>
    <property type="match status" value="1"/>
</dbReference>
<feature type="signal peptide" evidence="1">
    <location>
        <begin position="1"/>
        <end position="22"/>
    </location>
</feature>
<feature type="propeptide" id="PRO_0000454753" evidence="5">
    <location>
        <begin position="23"/>
        <end position="57"/>
    </location>
</feature>
<feature type="chain" id="PRO_0000454754" description="Omega toxin Ap5" evidence="5">
    <location>
        <begin position="58"/>
        <end position="103"/>
    </location>
</feature>
<feature type="chain" id="PRO_0000454755" description="Omega toxin Ap3" evidence="5">
    <location>
        <begin position="58"/>
        <end position="98"/>
    </location>
</feature>
<feature type="disulfide bond" evidence="5">
    <location>
        <begin position="58"/>
        <end position="73"/>
    </location>
</feature>
<feature type="disulfide bond" evidence="5">
    <location>
        <begin position="65"/>
        <end position="78"/>
    </location>
</feature>
<feature type="disulfide bond" evidence="5">
    <location>
        <begin position="72"/>
        <end position="93"/>
    </location>
</feature>
<evidence type="ECO:0000255" key="1"/>
<evidence type="ECO:0000269" key="2">
    <source>
    </source>
</evidence>
<evidence type="ECO:0000303" key="3">
    <source>
    </source>
</evidence>
<evidence type="ECO:0000305" key="4"/>
<evidence type="ECO:0000305" key="5">
    <source>
    </source>
</evidence>
<organism>
    <name type="scientific">Acanthoscurria paulensis</name>
    <name type="common">Brazilian giant black tarantula spider</name>
    <dbReference type="NCBI Taxonomy" id="1264770"/>
    <lineage>
        <taxon>Eukaryota</taxon>
        <taxon>Metazoa</taxon>
        <taxon>Ecdysozoa</taxon>
        <taxon>Arthropoda</taxon>
        <taxon>Chelicerata</taxon>
        <taxon>Arachnida</taxon>
        <taxon>Araneae</taxon>
        <taxon>Mygalomorphae</taxon>
        <taxon>Theraphosidae</taxon>
        <taxon>Acanthoscurria</taxon>
    </lineage>
</organism>